<accession>P0DQS7</accession>
<reference key="1">
    <citation type="journal article" date="2018" name="Sci. Rep.">
        <title>Peptide ion channel toxins from the bootlace worm, the longest animal on Earth.</title>
        <authorList>
            <person name="Jacobsson E."/>
            <person name="Andersson H.S."/>
            <person name="Strand M."/>
            <person name="Peigneur S."/>
            <person name="Eriksson C."/>
            <person name="Loden H."/>
            <person name="Shariatgorji M."/>
            <person name="Andren P.E."/>
            <person name="Lebbe E.K.M."/>
            <person name="Rosengren K.J."/>
            <person name="Tytgat J."/>
            <person name="Goeransson U."/>
        </authorList>
    </citation>
    <scope>NUCLEOTIDE SEQUENCE [MRNA]</scope>
</reference>
<reference key="2">
    <citation type="journal article" date="2021" name="J. Nat. Prod.">
        <title>Functional characterization of the nemertide alpha family of peptide toxins.</title>
        <authorList>
            <person name="Jacobsson E."/>
            <person name="Peigneur S."/>
            <person name="Andersson H.S."/>
            <person name="Laborde Q."/>
            <person name="Strand M."/>
            <person name="Tytgat J."/>
            <person name="Goeransson U."/>
        </authorList>
    </citation>
    <scope>NUCLEOTIDE SEQUENCE [MRNA]</scope>
    <scope>SYNTHESIS</scope>
    <scope>FUNCTION</scope>
    <scope>BIOASSAY</scope>
</reference>
<name>NEMA5_RAMPS</name>
<feature type="chain" id="PRO_0000454428" description="Nemertide alpha-5" evidence="5">
    <location>
        <begin position="1"/>
        <end position="31"/>
    </location>
</feature>
<feature type="site" description="Hydrophobic/aromatic residue important for potent activity" evidence="6">
    <location>
        <position position="8"/>
    </location>
</feature>
<feature type="modified residue" description="4-hydroxyproline" evidence="1">
    <location>
        <position position="28"/>
    </location>
</feature>
<feature type="modified residue" description="4-hydroxyproline" evidence="1">
    <location>
        <position position="29"/>
    </location>
</feature>
<feature type="disulfide bond" evidence="1">
    <location>
        <begin position="2"/>
        <end position="16"/>
    </location>
</feature>
<feature type="disulfide bond" evidence="1">
    <location>
        <begin position="9"/>
        <end position="20"/>
    </location>
</feature>
<feature type="disulfide bond" evidence="1">
    <location>
        <begin position="15"/>
        <end position="26"/>
    </location>
</feature>
<organism>
    <name type="scientific">Ramphogordius pseudolacteus</name>
    <name type="common">Ribbon worm</name>
    <name type="synonym">Lineus pseudolacteus</name>
    <dbReference type="NCBI Taxonomy" id="947579"/>
    <lineage>
        <taxon>Eukaryota</taxon>
        <taxon>Metazoa</taxon>
        <taxon>Spiralia</taxon>
        <taxon>Lophotrochozoa</taxon>
        <taxon>Nemertea</taxon>
        <taxon>Pilidiophora</taxon>
        <taxon>Heteronemertea</taxon>
        <taxon>Lineidae</taxon>
        <taxon>Ramphogordius</taxon>
    </lineage>
</organism>
<proteinExistence type="inferred from homology"/>
<evidence type="ECO:0000250" key="1">
    <source>
        <dbReference type="UniProtKB" id="P0DM24"/>
    </source>
</evidence>
<evidence type="ECO:0000269" key="2">
    <source>
    </source>
</evidence>
<evidence type="ECO:0000303" key="3">
    <source>
    </source>
</evidence>
<evidence type="ECO:0000305" key="4"/>
<evidence type="ECO:0000305" key="5">
    <source>
    </source>
</evidence>
<evidence type="ECO:0000305" key="6">
    <source>
    </source>
</evidence>
<comment type="function">
    <text evidence="1 2">Highly potent toxin against both insect and some mammalian sodium channels (Nav) (PubMed:34445875). It potently inhibits inactivation of insect sodium channels of B.germanica (BgNav1) (EC(50)=7.8 nM) and also delays the inactivation of mammalian Nav with potent activity on Nav1.3/SCN3A and Nav1.4/SCN4A (hNav1.1/SCN1A; EC(50)=102.1 nM, rNav1.2/SCN2A; EC(50)=156.1 nM, rNav1.3/SCN3A; EC(50)=9.4 nM, rNav1.4/SCN4A; EC(50)=15.4 nM, hNav1.5/SCN5A; EC(50)=132.7 nM, mNav1.6/SCN8A; EC(50)=66.9 nM, hNav1.9/SCN9A; EC(50)=73 nM) (PubMed:34445875). 1 uM is enough to completely inhibits the inactivation, resulting in sustained non-inactivating currents (By similarity). In addition, the toxin significantly enhances the recovery from inactivation, and the open state is not required for the toxin to interact with the channel (By similarity). In vivo, injection into brine shrimp (Artemia salina) stops movement or causes death after 24 hours (EC(50)=0.4 uM) (PubMed:34445875).</text>
</comment>
<comment type="subcellular location">
    <subcellularLocation>
        <location evidence="1">Secreted</location>
    </subcellularLocation>
</comment>
<comment type="tissue specificity">
    <text evidence="1">Confined to the epidermis and to the mucus layer.</text>
</comment>
<comment type="domain">
    <text evidence="1">The presence of a 'disulfide through disulfide knot' structurally defines this protein as a knottin.</text>
</comment>
<comment type="miscellaneous">
    <text evidence="2">Negative results: does not show effect on rat Nav1.8/SCN10A.</text>
</comment>
<comment type="similarity">
    <text evidence="4">Belongs to the nemertide family.</text>
</comment>
<dbReference type="SMR" id="P0DQS7"/>
<dbReference type="GO" id="GO:0005576">
    <property type="term" value="C:extracellular region"/>
    <property type="evidence" value="ECO:0007669"/>
    <property type="project" value="UniProtKB-SubCell"/>
</dbReference>
<dbReference type="GO" id="GO:0017080">
    <property type="term" value="F:sodium channel regulator activity"/>
    <property type="evidence" value="ECO:0007669"/>
    <property type="project" value="UniProtKB-KW"/>
</dbReference>
<dbReference type="GO" id="GO:0090729">
    <property type="term" value="F:toxin activity"/>
    <property type="evidence" value="ECO:0007669"/>
    <property type="project" value="UniProtKB-KW"/>
</dbReference>
<keyword id="KW-1015">Disulfide bond</keyword>
<keyword id="KW-0379">Hydroxylation</keyword>
<keyword id="KW-0872">Ion channel impairing toxin</keyword>
<keyword id="KW-0960">Knottin</keyword>
<keyword id="KW-0528">Neurotoxin</keyword>
<keyword id="KW-0964">Secreted</keyword>
<keyword id="KW-0800">Toxin</keyword>
<keyword id="KW-0738">Voltage-gated sodium channel impairing toxin</keyword>
<sequence>GCIATGSFCTLSKGCCTKNCGWNFHCNPPNQ</sequence>
<protein>
    <recommendedName>
        <fullName evidence="3">Nemertide alpha-5</fullName>
    </recommendedName>
</protein>